<proteinExistence type="inferred from homology"/>
<comment type="function">
    <text evidence="1">Co-chaperone involved in the maturation of iron-sulfur cluster-containing proteins. Seems to help targeting proteins to be folded toward HscA.</text>
</comment>
<comment type="subunit">
    <text evidence="1">Interacts with HscA and stimulates its ATPase activity.</text>
</comment>
<comment type="similarity">
    <text evidence="1">Belongs to the HscB family.</text>
</comment>
<organism>
    <name type="scientific">Acinetobacter baylyi (strain ATCC 33305 / BD413 / ADP1)</name>
    <dbReference type="NCBI Taxonomy" id="62977"/>
    <lineage>
        <taxon>Bacteria</taxon>
        <taxon>Pseudomonadati</taxon>
        <taxon>Pseudomonadota</taxon>
        <taxon>Gammaproteobacteria</taxon>
        <taxon>Moraxellales</taxon>
        <taxon>Moraxellaceae</taxon>
        <taxon>Acinetobacter</taxon>
    </lineage>
</organism>
<reference key="1">
    <citation type="journal article" date="2004" name="Nucleic Acids Res.">
        <title>Unique features revealed by the genome sequence of Acinetobacter sp. ADP1, a versatile and naturally transformation competent bacterium.</title>
        <authorList>
            <person name="Barbe V."/>
            <person name="Vallenet D."/>
            <person name="Fonknechten N."/>
            <person name="Kreimeyer A."/>
            <person name="Oztas S."/>
            <person name="Labarre L."/>
            <person name="Cruveiller S."/>
            <person name="Robert C."/>
            <person name="Duprat S."/>
            <person name="Wincker P."/>
            <person name="Ornston L.N."/>
            <person name="Weissenbach J."/>
            <person name="Marliere P."/>
            <person name="Cohen G.N."/>
            <person name="Medigue C."/>
        </authorList>
    </citation>
    <scope>NUCLEOTIDE SEQUENCE [LARGE SCALE GENOMIC DNA]</scope>
    <source>
        <strain>ATCC 33305 / BD413 / ADP1</strain>
    </source>
</reference>
<feature type="chain" id="PRO_1000131717" description="Co-chaperone protein HscB homolog">
    <location>
        <begin position="1"/>
        <end position="171"/>
    </location>
</feature>
<feature type="domain" description="J" evidence="1">
    <location>
        <begin position="2"/>
        <end position="69"/>
    </location>
</feature>
<dbReference type="EMBL" id="CR543861">
    <property type="protein sequence ID" value="CAG68266.1"/>
    <property type="molecule type" value="Genomic_DNA"/>
</dbReference>
<dbReference type="RefSeq" id="WP_004925597.1">
    <property type="nucleotide sequence ID" value="NC_005966.1"/>
</dbReference>
<dbReference type="SMR" id="Q6FCE5"/>
<dbReference type="STRING" id="202950.GCA_001485005_01157"/>
<dbReference type="GeneID" id="45233815"/>
<dbReference type="KEGG" id="aci:ACIAD1400"/>
<dbReference type="eggNOG" id="COG1076">
    <property type="taxonomic scope" value="Bacteria"/>
</dbReference>
<dbReference type="HOGENOM" id="CLU_068529_2_0_6"/>
<dbReference type="OrthoDB" id="287587at2"/>
<dbReference type="BioCyc" id="ASP62977:ACIAD_RS06465-MONOMER"/>
<dbReference type="Proteomes" id="UP000000430">
    <property type="component" value="Chromosome"/>
</dbReference>
<dbReference type="GO" id="GO:0001671">
    <property type="term" value="F:ATPase activator activity"/>
    <property type="evidence" value="ECO:0007669"/>
    <property type="project" value="InterPro"/>
</dbReference>
<dbReference type="GO" id="GO:0051087">
    <property type="term" value="F:protein-folding chaperone binding"/>
    <property type="evidence" value="ECO:0007669"/>
    <property type="project" value="InterPro"/>
</dbReference>
<dbReference type="GO" id="GO:0044571">
    <property type="term" value="P:[2Fe-2S] cluster assembly"/>
    <property type="evidence" value="ECO:0007669"/>
    <property type="project" value="InterPro"/>
</dbReference>
<dbReference type="GO" id="GO:0051259">
    <property type="term" value="P:protein complex oligomerization"/>
    <property type="evidence" value="ECO:0007669"/>
    <property type="project" value="InterPro"/>
</dbReference>
<dbReference type="GO" id="GO:0006457">
    <property type="term" value="P:protein folding"/>
    <property type="evidence" value="ECO:0007669"/>
    <property type="project" value="UniProtKB-UniRule"/>
</dbReference>
<dbReference type="CDD" id="cd06257">
    <property type="entry name" value="DnaJ"/>
    <property type="match status" value="1"/>
</dbReference>
<dbReference type="Gene3D" id="1.10.287.110">
    <property type="entry name" value="DnaJ domain"/>
    <property type="match status" value="1"/>
</dbReference>
<dbReference type="Gene3D" id="1.20.1280.20">
    <property type="entry name" value="HscB, C-terminal domain"/>
    <property type="match status" value="1"/>
</dbReference>
<dbReference type="HAMAP" id="MF_00682">
    <property type="entry name" value="HscB"/>
    <property type="match status" value="1"/>
</dbReference>
<dbReference type="InterPro" id="IPR001623">
    <property type="entry name" value="DnaJ_domain"/>
</dbReference>
<dbReference type="InterPro" id="IPR004640">
    <property type="entry name" value="HscB"/>
</dbReference>
<dbReference type="InterPro" id="IPR036386">
    <property type="entry name" value="HscB_C_sf"/>
</dbReference>
<dbReference type="InterPro" id="IPR009073">
    <property type="entry name" value="HscB_oligo_C"/>
</dbReference>
<dbReference type="InterPro" id="IPR036869">
    <property type="entry name" value="J_dom_sf"/>
</dbReference>
<dbReference type="NCBIfam" id="TIGR00714">
    <property type="entry name" value="hscB"/>
    <property type="match status" value="1"/>
</dbReference>
<dbReference type="PANTHER" id="PTHR14021">
    <property type="entry name" value="IRON-SULFUR CLUSTER CO-CHAPERONE PROTEIN HSCB"/>
    <property type="match status" value="1"/>
</dbReference>
<dbReference type="PANTHER" id="PTHR14021:SF15">
    <property type="entry name" value="IRON-SULFUR CLUSTER CO-CHAPERONE PROTEIN HSCB"/>
    <property type="match status" value="1"/>
</dbReference>
<dbReference type="Pfam" id="PF00226">
    <property type="entry name" value="DnaJ"/>
    <property type="match status" value="1"/>
</dbReference>
<dbReference type="Pfam" id="PF07743">
    <property type="entry name" value="HSCB_C"/>
    <property type="match status" value="1"/>
</dbReference>
<dbReference type="SMART" id="SM00271">
    <property type="entry name" value="DnaJ"/>
    <property type="match status" value="1"/>
</dbReference>
<dbReference type="SUPFAM" id="SSF46565">
    <property type="entry name" value="Chaperone J-domain"/>
    <property type="match status" value="1"/>
</dbReference>
<dbReference type="SUPFAM" id="SSF47144">
    <property type="entry name" value="HSC20 (HSCB), C-terminal oligomerisation domain"/>
    <property type="match status" value="1"/>
</dbReference>
<dbReference type="PROSITE" id="PS50076">
    <property type="entry name" value="DNAJ_2"/>
    <property type="match status" value="1"/>
</dbReference>
<accession>Q6FCE5</accession>
<evidence type="ECO:0000255" key="1">
    <source>
        <dbReference type="HAMAP-Rule" id="MF_00682"/>
    </source>
</evidence>
<protein>
    <recommendedName>
        <fullName evidence="1">Co-chaperone protein HscB homolog</fullName>
    </recommendedName>
</protein>
<name>HSCB_ACIAD</name>
<gene>
    <name evidence="1" type="primary">hscB</name>
    <name type="ordered locus">ACIAD1400</name>
</gene>
<sequence>MNHFELFDLPVALDIDLVALKANFLKLQQLHHPDKALDKDQALIMSSDINQAYKILSQVDSRAAYLLSLKKQDHHLDQSIHDFEFLQSALEIREQLDEADSQEQLITLKNEVKQWVDGLIREFKIDYSDEDWSEARDTVRKLRFFQRVLNDIDKAEDQLLDEDSFDLDDDF</sequence>
<keyword id="KW-0143">Chaperone</keyword>